<keyword id="KW-0488">Methylation</keyword>
<keyword id="KW-0687">Ribonucleoprotein</keyword>
<keyword id="KW-0689">Ribosomal protein</keyword>
<keyword id="KW-0694">RNA-binding</keyword>
<keyword id="KW-0699">rRNA-binding</keyword>
<gene>
    <name evidence="1" type="primary">rplK</name>
    <name type="ordered locus">DehaBAV1_0884</name>
</gene>
<protein>
    <recommendedName>
        <fullName evidence="1">Large ribosomal subunit protein uL11</fullName>
    </recommendedName>
    <alternativeName>
        <fullName evidence="2">50S ribosomal protein L11</fullName>
    </alternativeName>
</protein>
<organism>
    <name type="scientific">Dehalococcoides mccartyi (strain ATCC BAA-2100 / JCM 16839 / KCTC 5957 / BAV1)</name>
    <dbReference type="NCBI Taxonomy" id="216389"/>
    <lineage>
        <taxon>Bacteria</taxon>
        <taxon>Bacillati</taxon>
        <taxon>Chloroflexota</taxon>
        <taxon>Dehalococcoidia</taxon>
        <taxon>Dehalococcoidales</taxon>
        <taxon>Dehalococcoidaceae</taxon>
        <taxon>Dehalococcoides</taxon>
    </lineage>
</organism>
<feature type="chain" id="PRO_1000083379" description="Large ribosomal subunit protein uL11">
    <location>
        <begin position="1"/>
        <end position="140"/>
    </location>
</feature>
<evidence type="ECO:0000255" key="1">
    <source>
        <dbReference type="HAMAP-Rule" id="MF_00736"/>
    </source>
</evidence>
<evidence type="ECO:0000305" key="2"/>
<dbReference type="EMBL" id="CP000688">
    <property type="protein sequence ID" value="ABQ17466.1"/>
    <property type="molecule type" value="Genomic_DNA"/>
</dbReference>
<dbReference type="SMR" id="A5FQR2"/>
<dbReference type="KEGG" id="deb:DehaBAV1_0884"/>
<dbReference type="PATRIC" id="fig|216389.18.peg.934"/>
<dbReference type="HOGENOM" id="CLU_074237_2_1_0"/>
<dbReference type="GO" id="GO:0022625">
    <property type="term" value="C:cytosolic large ribosomal subunit"/>
    <property type="evidence" value="ECO:0007669"/>
    <property type="project" value="TreeGrafter"/>
</dbReference>
<dbReference type="GO" id="GO:0070180">
    <property type="term" value="F:large ribosomal subunit rRNA binding"/>
    <property type="evidence" value="ECO:0007669"/>
    <property type="project" value="UniProtKB-UniRule"/>
</dbReference>
<dbReference type="GO" id="GO:0003735">
    <property type="term" value="F:structural constituent of ribosome"/>
    <property type="evidence" value="ECO:0007669"/>
    <property type="project" value="InterPro"/>
</dbReference>
<dbReference type="GO" id="GO:0006412">
    <property type="term" value="P:translation"/>
    <property type="evidence" value="ECO:0007669"/>
    <property type="project" value="UniProtKB-UniRule"/>
</dbReference>
<dbReference type="CDD" id="cd00349">
    <property type="entry name" value="Ribosomal_L11"/>
    <property type="match status" value="1"/>
</dbReference>
<dbReference type="FunFam" id="1.10.10.250:FF:000001">
    <property type="entry name" value="50S ribosomal protein L11"/>
    <property type="match status" value="1"/>
</dbReference>
<dbReference type="FunFam" id="3.30.1550.10:FF:000001">
    <property type="entry name" value="50S ribosomal protein L11"/>
    <property type="match status" value="1"/>
</dbReference>
<dbReference type="Gene3D" id="1.10.10.250">
    <property type="entry name" value="Ribosomal protein L11, C-terminal domain"/>
    <property type="match status" value="1"/>
</dbReference>
<dbReference type="Gene3D" id="3.30.1550.10">
    <property type="entry name" value="Ribosomal protein L11/L12, N-terminal domain"/>
    <property type="match status" value="1"/>
</dbReference>
<dbReference type="HAMAP" id="MF_00736">
    <property type="entry name" value="Ribosomal_uL11"/>
    <property type="match status" value="1"/>
</dbReference>
<dbReference type="InterPro" id="IPR000911">
    <property type="entry name" value="Ribosomal_uL11"/>
</dbReference>
<dbReference type="InterPro" id="IPR006519">
    <property type="entry name" value="Ribosomal_uL11_bac-typ"/>
</dbReference>
<dbReference type="InterPro" id="IPR020783">
    <property type="entry name" value="Ribosomal_uL11_C"/>
</dbReference>
<dbReference type="InterPro" id="IPR036769">
    <property type="entry name" value="Ribosomal_uL11_C_sf"/>
</dbReference>
<dbReference type="InterPro" id="IPR020785">
    <property type="entry name" value="Ribosomal_uL11_CS"/>
</dbReference>
<dbReference type="InterPro" id="IPR020784">
    <property type="entry name" value="Ribosomal_uL11_N"/>
</dbReference>
<dbReference type="InterPro" id="IPR036796">
    <property type="entry name" value="Ribosomal_uL11_N_sf"/>
</dbReference>
<dbReference type="NCBIfam" id="TIGR01632">
    <property type="entry name" value="L11_bact"/>
    <property type="match status" value="1"/>
</dbReference>
<dbReference type="PANTHER" id="PTHR11661">
    <property type="entry name" value="60S RIBOSOMAL PROTEIN L12"/>
    <property type="match status" value="1"/>
</dbReference>
<dbReference type="PANTHER" id="PTHR11661:SF1">
    <property type="entry name" value="LARGE RIBOSOMAL SUBUNIT PROTEIN UL11M"/>
    <property type="match status" value="1"/>
</dbReference>
<dbReference type="Pfam" id="PF00298">
    <property type="entry name" value="Ribosomal_L11"/>
    <property type="match status" value="1"/>
</dbReference>
<dbReference type="Pfam" id="PF03946">
    <property type="entry name" value="Ribosomal_L11_N"/>
    <property type="match status" value="1"/>
</dbReference>
<dbReference type="SMART" id="SM00649">
    <property type="entry name" value="RL11"/>
    <property type="match status" value="1"/>
</dbReference>
<dbReference type="SUPFAM" id="SSF54747">
    <property type="entry name" value="Ribosomal L11/L12e N-terminal domain"/>
    <property type="match status" value="1"/>
</dbReference>
<dbReference type="SUPFAM" id="SSF46906">
    <property type="entry name" value="Ribosomal protein L11, C-terminal domain"/>
    <property type="match status" value="1"/>
</dbReference>
<dbReference type="PROSITE" id="PS00359">
    <property type="entry name" value="RIBOSOMAL_L11"/>
    <property type="match status" value="1"/>
</dbReference>
<accession>A5FQR2</accession>
<comment type="function">
    <text evidence="1">Forms part of the ribosomal stalk which helps the ribosome interact with GTP-bound translation factors.</text>
</comment>
<comment type="subunit">
    <text evidence="1">Part of the ribosomal stalk of the 50S ribosomal subunit. Interacts with L10 and the large rRNA to form the base of the stalk. L10 forms an elongated spine to which L12 dimers bind in a sequential fashion forming a multimeric L10(L12)X complex.</text>
</comment>
<comment type="PTM">
    <text evidence="1">One or more lysine residues are methylated.</text>
</comment>
<comment type="similarity">
    <text evidence="1">Belongs to the universal ribosomal protein uL11 family.</text>
</comment>
<name>RL11_DEHMB</name>
<reference key="1">
    <citation type="submission" date="2007-05" db="EMBL/GenBank/DDBJ databases">
        <title>Complete sequence of Dehalococcoides sp. BAV1.</title>
        <authorList>
            <consortium name="US DOE Joint Genome Institute"/>
            <person name="Copeland A."/>
            <person name="Lucas S."/>
            <person name="Lapidus A."/>
            <person name="Barry K."/>
            <person name="Detter J.C."/>
            <person name="Glavina del Rio T."/>
            <person name="Hammon N."/>
            <person name="Israni S."/>
            <person name="Pitluck S."/>
            <person name="Lowry S."/>
            <person name="Clum A."/>
            <person name="Schmutz J."/>
            <person name="Larimer F."/>
            <person name="Land M."/>
            <person name="Hauser L."/>
            <person name="Kyrpides N."/>
            <person name="Kim E."/>
            <person name="Ritalahti K.M."/>
            <person name="Loeffler F."/>
            <person name="Richardson P."/>
        </authorList>
    </citation>
    <scope>NUCLEOTIDE SEQUENCE [LARGE SCALE GENOMIC DNA]</scope>
    <source>
        <strain>ATCC BAA-2100 / JCM 16839 / KCTC 5957 / BAV1</strain>
    </source>
</reference>
<sequence length="140" mass="14691">MAKKVKAIVKLQIPAGKANPAPPIGPALGQHGINIMGFCKEYNERTASMVGTIVPAEITIYDDRSFTFITKTPPAADLLKKAAGVTSGSGTPSKSVVAVISKGQLREIASVKMKDLNAVDIEGAERIIEGTARSMGIKVE</sequence>
<proteinExistence type="inferred from homology"/>